<accession>A3P098</accession>
<proteinExistence type="inferred from homology"/>
<protein>
    <recommendedName>
        <fullName evidence="1">Large ribosomal subunit protein uL6</fullName>
    </recommendedName>
    <alternativeName>
        <fullName evidence="2">50S ribosomal protein L6</fullName>
    </alternativeName>
</protein>
<organism>
    <name type="scientific">Burkholderia pseudomallei (strain 1106a)</name>
    <dbReference type="NCBI Taxonomy" id="357348"/>
    <lineage>
        <taxon>Bacteria</taxon>
        <taxon>Pseudomonadati</taxon>
        <taxon>Pseudomonadota</taxon>
        <taxon>Betaproteobacteria</taxon>
        <taxon>Burkholderiales</taxon>
        <taxon>Burkholderiaceae</taxon>
        <taxon>Burkholderia</taxon>
        <taxon>pseudomallei group</taxon>
    </lineage>
</organism>
<reference key="1">
    <citation type="journal article" date="2010" name="Genome Biol. Evol.">
        <title>Continuing evolution of Burkholderia mallei through genome reduction and large-scale rearrangements.</title>
        <authorList>
            <person name="Losada L."/>
            <person name="Ronning C.M."/>
            <person name="DeShazer D."/>
            <person name="Woods D."/>
            <person name="Fedorova N."/>
            <person name="Kim H.S."/>
            <person name="Shabalina S.A."/>
            <person name="Pearson T.R."/>
            <person name="Brinkac L."/>
            <person name="Tan P."/>
            <person name="Nandi T."/>
            <person name="Crabtree J."/>
            <person name="Badger J."/>
            <person name="Beckstrom-Sternberg S."/>
            <person name="Saqib M."/>
            <person name="Schutzer S.E."/>
            <person name="Keim P."/>
            <person name="Nierman W.C."/>
        </authorList>
    </citation>
    <scope>NUCLEOTIDE SEQUENCE [LARGE SCALE GENOMIC DNA]</scope>
    <source>
        <strain>1106a</strain>
    </source>
</reference>
<name>RL6_BURP0</name>
<comment type="function">
    <text evidence="1">This protein binds to the 23S rRNA, and is important in its secondary structure. It is located near the subunit interface in the base of the L7/L12 stalk, and near the tRNA binding site of the peptidyltransferase center.</text>
</comment>
<comment type="subunit">
    <text evidence="1">Part of the 50S ribosomal subunit.</text>
</comment>
<comment type="similarity">
    <text evidence="1">Belongs to the universal ribosomal protein uL6 family.</text>
</comment>
<dbReference type="EMBL" id="CP000572">
    <property type="protein sequence ID" value="ABN89083.1"/>
    <property type="molecule type" value="Genomic_DNA"/>
</dbReference>
<dbReference type="RefSeq" id="WP_004197947.1">
    <property type="nucleotide sequence ID" value="NC_009076.1"/>
</dbReference>
<dbReference type="SMR" id="A3P098"/>
<dbReference type="GeneID" id="93061817"/>
<dbReference type="KEGG" id="bpl:BURPS1106A_3789"/>
<dbReference type="HOGENOM" id="CLU_065464_1_2_4"/>
<dbReference type="Proteomes" id="UP000006738">
    <property type="component" value="Chromosome I"/>
</dbReference>
<dbReference type="GO" id="GO:0022625">
    <property type="term" value="C:cytosolic large ribosomal subunit"/>
    <property type="evidence" value="ECO:0007669"/>
    <property type="project" value="TreeGrafter"/>
</dbReference>
<dbReference type="GO" id="GO:0019843">
    <property type="term" value="F:rRNA binding"/>
    <property type="evidence" value="ECO:0007669"/>
    <property type="project" value="UniProtKB-UniRule"/>
</dbReference>
<dbReference type="GO" id="GO:0003735">
    <property type="term" value="F:structural constituent of ribosome"/>
    <property type="evidence" value="ECO:0007669"/>
    <property type="project" value="InterPro"/>
</dbReference>
<dbReference type="GO" id="GO:0002181">
    <property type="term" value="P:cytoplasmic translation"/>
    <property type="evidence" value="ECO:0007669"/>
    <property type="project" value="TreeGrafter"/>
</dbReference>
<dbReference type="FunFam" id="3.90.930.12:FF:000001">
    <property type="entry name" value="50S ribosomal protein L6"/>
    <property type="match status" value="1"/>
</dbReference>
<dbReference type="Gene3D" id="3.90.930.12">
    <property type="entry name" value="Ribosomal protein L6, alpha-beta domain"/>
    <property type="match status" value="2"/>
</dbReference>
<dbReference type="HAMAP" id="MF_01365_B">
    <property type="entry name" value="Ribosomal_uL6_B"/>
    <property type="match status" value="1"/>
</dbReference>
<dbReference type="InterPro" id="IPR000702">
    <property type="entry name" value="Ribosomal_uL6-like"/>
</dbReference>
<dbReference type="InterPro" id="IPR036789">
    <property type="entry name" value="Ribosomal_uL6-like_a/b-dom_sf"/>
</dbReference>
<dbReference type="InterPro" id="IPR020040">
    <property type="entry name" value="Ribosomal_uL6_a/b-dom"/>
</dbReference>
<dbReference type="InterPro" id="IPR019906">
    <property type="entry name" value="Ribosomal_uL6_bac-type"/>
</dbReference>
<dbReference type="InterPro" id="IPR002358">
    <property type="entry name" value="Ribosomal_uL6_CS"/>
</dbReference>
<dbReference type="NCBIfam" id="TIGR03654">
    <property type="entry name" value="L6_bact"/>
    <property type="match status" value="1"/>
</dbReference>
<dbReference type="PANTHER" id="PTHR11655">
    <property type="entry name" value="60S/50S RIBOSOMAL PROTEIN L6/L9"/>
    <property type="match status" value="1"/>
</dbReference>
<dbReference type="PANTHER" id="PTHR11655:SF14">
    <property type="entry name" value="LARGE RIBOSOMAL SUBUNIT PROTEIN UL6M"/>
    <property type="match status" value="1"/>
</dbReference>
<dbReference type="Pfam" id="PF00347">
    <property type="entry name" value="Ribosomal_L6"/>
    <property type="match status" value="2"/>
</dbReference>
<dbReference type="PIRSF" id="PIRSF002162">
    <property type="entry name" value="Ribosomal_L6"/>
    <property type="match status" value="1"/>
</dbReference>
<dbReference type="PRINTS" id="PR00059">
    <property type="entry name" value="RIBOSOMALL6"/>
</dbReference>
<dbReference type="SUPFAM" id="SSF56053">
    <property type="entry name" value="Ribosomal protein L6"/>
    <property type="match status" value="2"/>
</dbReference>
<dbReference type="PROSITE" id="PS00525">
    <property type="entry name" value="RIBOSOMAL_L6_1"/>
    <property type="match status" value="1"/>
</dbReference>
<feature type="chain" id="PRO_1000055207" description="Large ribosomal subunit protein uL6">
    <location>
        <begin position="1"/>
        <end position="176"/>
    </location>
</feature>
<gene>
    <name evidence="1" type="primary">rplF</name>
    <name type="ordered locus">BURPS1106A_3789</name>
</gene>
<evidence type="ECO:0000255" key="1">
    <source>
        <dbReference type="HAMAP-Rule" id="MF_01365"/>
    </source>
</evidence>
<evidence type="ECO:0000305" key="2"/>
<sequence>MSRVGKSPIALQGAEVKLADGAITVKGPLGTITQAVNPLVNVANNDGTLNLSPVDDSREANALSGTMRAIIANAVHGVTKGFERKLTLVGVGYRAQAQGDKLNLSLGFSHPVVHQMPEGIKAETPTQTEIVIKGIDKQKVGQVAAEVRGYRPPEPYKGKGVRYADEVVILKETKKK</sequence>
<keyword id="KW-0687">Ribonucleoprotein</keyword>
<keyword id="KW-0689">Ribosomal protein</keyword>
<keyword id="KW-0694">RNA-binding</keyword>
<keyword id="KW-0699">rRNA-binding</keyword>